<accession>A1VES0</accession>
<name>RL34_NITV4</name>
<organism>
    <name type="scientific">Nitratidesulfovibrio vulgaris (strain DP4)</name>
    <name type="common">Desulfovibrio vulgaris</name>
    <dbReference type="NCBI Taxonomy" id="391774"/>
    <lineage>
        <taxon>Bacteria</taxon>
        <taxon>Pseudomonadati</taxon>
        <taxon>Thermodesulfobacteriota</taxon>
        <taxon>Desulfovibrionia</taxon>
        <taxon>Desulfovibrionales</taxon>
        <taxon>Desulfovibrionaceae</taxon>
        <taxon>Nitratidesulfovibrio</taxon>
    </lineage>
</organism>
<gene>
    <name evidence="1" type="primary">rpmH</name>
    <name type="ordered locus">Dvul_1920</name>
</gene>
<reference key="1">
    <citation type="journal article" date="2009" name="Environ. Microbiol.">
        <title>Contribution of mobile genetic elements to Desulfovibrio vulgaris genome plasticity.</title>
        <authorList>
            <person name="Walker C.B."/>
            <person name="Stolyar S."/>
            <person name="Chivian D."/>
            <person name="Pinel N."/>
            <person name="Gabster J.A."/>
            <person name="Dehal P.S."/>
            <person name="He Z."/>
            <person name="Yang Z.K."/>
            <person name="Yen H.C."/>
            <person name="Zhou J."/>
            <person name="Wall J.D."/>
            <person name="Hazen T.C."/>
            <person name="Arkin A.P."/>
            <person name="Stahl D.A."/>
        </authorList>
    </citation>
    <scope>NUCLEOTIDE SEQUENCE [LARGE SCALE GENOMIC DNA]</scope>
    <source>
        <strain>DP4</strain>
    </source>
</reference>
<protein>
    <recommendedName>
        <fullName evidence="1">Large ribosomal subunit protein bL34</fullName>
    </recommendedName>
    <alternativeName>
        <fullName evidence="2">50S ribosomal protein L34</fullName>
    </alternativeName>
</protein>
<comment type="similarity">
    <text evidence="1">Belongs to the bacterial ribosomal protein bL34 family.</text>
</comment>
<evidence type="ECO:0000255" key="1">
    <source>
        <dbReference type="HAMAP-Rule" id="MF_00391"/>
    </source>
</evidence>
<evidence type="ECO:0000305" key="2"/>
<dbReference type="EMBL" id="CP000527">
    <property type="protein sequence ID" value="ABM28936.1"/>
    <property type="molecule type" value="Genomic_DNA"/>
</dbReference>
<dbReference type="RefSeq" id="WP_010938373.1">
    <property type="nucleotide sequence ID" value="NC_008751.1"/>
</dbReference>
<dbReference type="SMR" id="A1VES0"/>
<dbReference type="KEGG" id="dvl:Dvul_1920"/>
<dbReference type="HOGENOM" id="CLU_129938_2_0_7"/>
<dbReference type="Proteomes" id="UP000009173">
    <property type="component" value="Chromosome"/>
</dbReference>
<dbReference type="GO" id="GO:1990904">
    <property type="term" value="C:ribonucleoprotein complex"/>
    <property type="evidence" value="ECO:0007669"/>
    <property type="project" value="UniProtKB-KW"/>
</dbReference>
<dbReference type="GO" id="GO:0005840">
    <property type="term" value="C:ribosome"/>
    <property type="evidence" value="ECO:0007669"/>
    <property type="project" value="UniProtKB-KW"/>
</dbReference>
<dbReference type="GO" id="GO:0003735">
    <property type="term" value="F:structural constituent of ribosome"/>
    <property type="evidence" value="ECO:0007669"/>
    <property type="project" value="InterPro"/>
</dbReference>
<dbReference type="GO" id="GO:0006412">
    <property type="term" value="P:translation"/>
    <property type="evidence" value="ECO:0007669"/>
    <property type="project" value="UniProtKB-UniRule"/>
</dbReference>
<dbReference type="FunFam" id="1.10.287.3980:FF:000001">
    <property type="entry name" value="Mitochondrial ribosomal protein L34"/>
    <property type="match status" value="1"/>
</dbReference>
<dbReference type="Gene3D" id="1.10.287.3980">
    <property type="match status" value="1"/>
</dbReference>
<dbReference type="HAMAP" id="MF_00391">
    <property type="entry name" value="Ribosomal_bL34"/>
    <property type="match status" value="1"/>
</dbReference>
<dbReference type="InterPro" id="IPR000271">
    <property type="entry name" value="Ribosomal_bL34"/>
</dbReference>
<dbReference type="InterPro" id="IPR020939">
    <property type="entry name" value="Ribosomal_bL34_CS"/>
</dbReference>
<dbReference type="NCBIfam" id="TIGR01030">
    <property type="entry name" value="rpmH_bact"/>
    <property type="match status" value="1"/>
</dbReference>
<dbReference type="PANTHER" id="PTHR14503:SF4">
    <property type="entry name" value="LARGE RIBOSOMAL SUBUNIT PROTEIN BL34M"/>
    <property type="match status" value="1"/>
</dbReference>
<dbReference type="PANTHER" id="PTHR14503">
    <property type="entry name" value="MITOCHONDRIAL RIBOSOMAL PROTEIN 34 FAMILY MEMBER"/>
    <property type="match status" value="1"/>
</dbReference>
<dbReference type="Pfam" id="PF00468">
    <property type="entry name" value="Ribosomal_L34"/>
    <property type="match status" value="1"/>
</dbReference>
<dbReference type="PROSITE" id="PS00784">
    <property type="entry name" value="RIBOSOMAL_L34"/>
    <property type="match status" value="1"/>
</dbReference>
<keyword id="KW-0687">Ribonucleoprotein</keyword>
<keyword id="KW-0689">Ribosomal protein</keyword>
<sequence>MKRTYQPSKIRRKRSLGFRARMATAAGREIIRRRRAKGRKKLAA</sequence>
<feature type="chain" id="PRO_1000013332" description="Large ribosomal subunit protein bL34">
    <location>
        <begin position="1"/>
        <end position="44"/>
    </location>
</feature>
<proteinExistence type="inferred from homology"/>